<sequence>MQEIIASVDHIKFDLEIAVEQQLGAQPLPFPGMDKSGAAVCEFFLKAACGKGGMCPFRHISGEKTVVCKHWLRGLCKKGDQCEFLHEYDMTKMPECYFYSKFGECSNKECPFLHIDPESKIKDCPWYDRGFCKHGPLCRHRHTRRVICVNYLVGFCPEGPSCKFMHPRFELPMGTTEQPPLPQQTQPPTKRAPQVIGVMQSQNSSAGNRGPRPLEQVTCYKCGEKGHYANRCTKGHLAFLSGQ</sequence>
<feature type="chain" id="PRO_0000266021" description="Cleavage and polyadenylation specificity factor subunit 4">
    <location>
        <begin position="1"/>
        <end position="243"/>
    </location>
</feature>
<feature type="zinc finger region" description="C3H1-type 1" evidence="4">
    <location>
        <begin position="35"/>
        <end position="61"/>
    </location>
</feature>
<feature type="zinc finger region" description="C3H1-type 2" evidence="4">
    <location>
        <begin position="62"/>
        <end position="89"/>
    </location>
</feature>
<feature type="zinc finger region" description="C3H1-type 3" evidence="4">
    <location>
        <begin position="90"/>
        <end position="117"/>
    </location>
</feature>
<feature type="zinc finger region" description="C3H1-type 4" evidence="4">
    <location>
        <begin position="118"/>
        <end position="142"/>
    </location>
</feature>
<feature type="zinc finger region" description="C3H1-type 5" evidence="4">
    <location>
        <begin position="143"/>
        <end position="169"/>
    </location>
</feature>
<feature type="zinc finger region" description="CCHC-type" evidence="3">
    <location>
        <begin position="217"/>
        <end position="234"/>
    </location>
</feature>
<feature type="modified residue" description="Phosphoserine" evidence="2">
    <location>
        <position position="241"/>
    </location>
</feature>
<proteinExistence type="evidence at transcript level"/>
<reference key="1">
    <citation type="journal article" date="2004" name="Genome Res.">
        <title>The status, quality, and expansion of the NIH full-length cDNA project: the Mammalian Gene Collection (MGC).</title>
        <authorList>
            <consortium name="The MGC Project Team"/>
        </authorList>
    </citation>
    <scope>NUCLEOTIDE SEQUENCE [LARGE SCALE MRNA]</scope>
    <source>
        <tissue>Ovary</tissue>
    </source>
</reference>
<comment type="function">
    <text>Component of the cleavage and polyadenylation specificity factor (CPSF) complex that play a key role in pre-mRNA 3'-end formation, recognizing the AAUAAA signal sequence and interacting with poly(A) polymerase and other factors to bring about cleavage and poly(A) addition. CPSF4 binds RNA polymers with a preference for poly(U).</text>
</comment>
<comment type="subunit">
    <text evidence="1">Component of the cleavage and polyadenylation specificity factor (CPSF) complex, composed of CPSF1, CPSF2, CPSF3, CPSF4 and FIP1L1. Interacts with FIP1L1 (By similarity).</text>
</comment>
<comment type="subcellular location">
    <subcellularLocation>
        <location evidence="1">Nucleus</location>
    </subcellularLocation>
</comment>
<comment type="similarity">
    <text evidence="5">Belongs to the CPSF4/YTH1 family.</text>
</comment>
<protein>
    <recommendedName>
        <fullName>Cleavage and polyadenylation specificity factor subunit 4</fullName>
    </recommendedName>
    <alternativeName>
        <fullName>Cleavage and polyadenylation specificity factor 30 kDa subunit</fullName>
        <shortName>CPSF 30 kDa subunit</shortName>
    </alternativeName>
</protein>
<organism>
    <name type="scientific">Rattus norvegicus</name>
    <name type="common">Rat</name>
    <dbReference type="NCBI Taxonomy" id="10116"/>
    <lineage>
        <taxon>Eukaryota</taxon>
        <taxon>Metazoa</taxon>
        <taxon>Chordata</taxon>
        <taxon>Craniata</taxon>
        <taxon>Vertebrata</taxon>
        <taxon>Euteleostomi</taxon>
        <taxon>Mammalia</taxon>
        <taxon>Eutheria</taxon>
        <taxon>Euarchontoglires</taxon>
        <taxon>Glires</taxon>
        <taxon>Rodentia</taxon>
        <taxon>Myomorpha</taxon>
        <taxon>Muroidea</taxon>
        <taxon>Muridae</taxon>
        <taxon>Murinae</taxon>
        <taxon>Rattus</taxon>
    </lineage>
</organism>
<gene>
    <name type="primary">Cpsf4</name>
</gene>
<dbReference type="EMBL" id="BC089824">
    <property type="protein sequence ID" value="AAH89824.1"/>
    <property type="molecule type" value="mRNA"/>
</dbReference>
<dbReference type="RefSeq" id="NP_001012351.1">
    <property type="nucleotide sequence ID" value="NM_001012351.3"/>
</dbReference>
<dbReference type="SMR" id="Q5FVR7"/>
<dbReference type="FunCoup" id="Q5FVR7">
    <property type="interactions" value="2967"/>
</dbReference>
<dbReference type="STRING" id="10116.ENSRNOP00000046991"/>
<dbReference type="PhosphoSitePlus" id="Q5FVR7"/>
<dbReference type="jPOST" id="Q5FVR7"/>
<dbReference type="PaxDb" id="10116-ENSRNOP00000046991"/>
<dbReference type="Ensembl" id="ENSRNOT00000042474.7">
    <property type="protein sequence ID" value="ENSRNOP00000046991.3"/>
    <property type="gene ID" value="ENSRNOG00000000985.9"/>
</dbReference>
<dbReference type="GeneID" id="304277"/>
<dbReference type="KEGG" id="rno:304277"/>
<dbReference type="AGR" id="RGD:620440"/>
<dbReference type="CTD" id="10898"/>
<dbReference type="RGD" id="620440">
    <property type="gene designation" value="Cpsf4"/>
</dbReference>
<dbReference type="eggNOG" id="KOG1040">
    <property type="taxonomic scope" value="Eukaryota"/>
</dbReference>
<dbReference type="GeneTree" id="ENSGT00940000155520"/>
<dbReference type="HOGENOM" id="CLU_024513_0_1_1"/>
<dbReference type="InParanoid" id="Q5FVR7"/>
<dbReference type="OMA" id="EEVTCFK"/>
<dbReference type="PhylomeDB" id="Q5FVR7"/>
<dbReference type="TreeFam" id="TF314871"/>
<dbReference type="Reactome" id="R-RNO-159231">
    <property type="pathway name" value="Transport of Mature mRNA Derived from an Intronless Transcript"/>
</dbReference>
<dbReference type="Reactome" id="R-RNO-72187">
    <property type="pathway name" value="mRNA 3'-end processing"/>
</dbReference>
<dbReference type="Reactome" id="R-RNO-72203">
    <property type="pathway name" value="Processing of Capped Intron-Containing Pre-mRNA"/>
</dbReference>
<dbReference type="Reactome" id="R-RNO-73856">
    <property type="pathway name" value="RNA Polymerase II Transcription Termination"/>
</dbReference>
<dbReference type="Reactome" id="R-RNO-77595">
    <property type="pathway name" value="Processing of Intronless Pre-mRNAs"/>
</dbReference>
<dbReference type="PRO" id="PR:Q5FVR7"/>
<dbReference type="Proteomes" id="UP000002494">
    <property type="component" value="Chromosome 12"/>
</dbReference>
<dbReference type="Bgee" id="ENSRNOG00000000985">
    <property type="expression patterns" value="Expressed in pancreas and 18 other cell types or tissues"/>
</dbReference>
<dbReference type="ExpressionAtlas" id="Q5FVR7">
    <property type="expression patterns" value="baseline"/>
</dbReference>
<dbReference type="GO" id="GO:0005847">
    <property type="term" value="C:mRNA cleavage and polyadenylation specificity factor complex"/>
    <property type="evidence" value="ECO:0000250"/>
    <property type="project" value="UniProtKB"/>
</dbReference>
<dbReference type="GO" id="GO:0003723">
    <property type="term" value="F:RNA binding"/>
    <property type="evidence" value="ECO:0007669"/>
    <property type="project" value="UniProtKB-KW"/>
</dbReference>
<dbReference type="GO" id="GO:1990837">
    <property type="term" value="F:sequence-specific double-stranded DNA binding"/>
    <property type="evidence" value="ECO:0000266"/>
    <property type="project" value="RGD"/>
</dbReference>
<dbReference type="GO" id="GO:0008270">
    <property type="term" value="F:zinc ion binding"/>
    <property type="evidence" value="ECO:0007669"/>
    <property type="project" value="UniProtKB-KW"/>
</dbReference>
<dbReference type="GO" id="GO:0006397">
    <property type="term" value="P:mRNA processing"/>
    <property type="evidence" value="ECO:0007669"/>
    <property type="project" value="UniProtKB-KW"/>
</dbReference>
<dbReference type="FunFam" id="4.10.60.10:FF:000008">
    <property type="entry name" value="Cleavage and polyadenylation specificity factor subunit 4"/>
    <property type="match status" value="1"/>
</dbReference>
<dbReference type="FunFam" id="4.10.1000.10:FF:000005">
    <property type="entry name" value="cleavage and polyadenylation specificity factor subunit 4"/>
    <property type="match status" value="1"/>
</dbReference>
<dbReference type="FunFam" id="4.10.1000.10:FF:000019">
    <property type="entry name" value="cleavage and polyadenylation specificity factor subunit 4 isoform X2"/>
    <property type="match status" value="1"/>
</dbReference>
<dbReference type="Gene3D" id="4.10.1000.10">
    <property type="entry name" value="Zinc finger, CCCH-type"/>
    <property type="match status" value="2"/>
</dbReference>
<dbReference type="Gene3D" id="4.10.60.10">
    <property type="entry name" value="Zinc finger, CCHC-type"/>
    <property type="match status" value="1"/>
</dbReference>
<dbReference type="InterPro" id="IPR045348">
    <property type="entry name" value="CPSF4/Yth1"/>
</dbReference>
<dbReference type="InterPro" id="IPR041686">
    <property type="entry name" value="Znf-CCCH_3"/>
</dbReference>
<dbReference type="InterPro" id="IPR000571">
    <property type="entry name" value="Znf_CCCH"/>
</dbReference>
<dbReference type="InterPro" id="IPR036855">
    <property type="entry name" value="Znf_CCCH_sf"/>
</dbReference>
<dbReference type="InterPro" id="IPR001878">
    <property type="entry name" value="Znf_CCHC"/>
</dbReference>
<dbReference type="InterPro" id="IPR036875">
    <property type="entry name" value="Znf_CCHC_sf"/>
</dbReference>
<dbReference type="PANTHER" id="PTHR23102:SF18">
    <property type="entry name" value="CLEAVAGE AND POLYADENYLATION SPECIFICITY FACTOR SUBUNIT 4"/>
    <property type="match status" value="1"/>
</dbReference>
<dbReference type="PANTHER" id="PTHR23102">
    <property type="entry name" value="CLEAVAGE AND POLYADENYLATION SPECIFICITY FACTOR SUBUNIT 4-RELATED"/>
    <property type="match status" value="1"/>
</dbReference>
<dbReference type="Pfam" id="PF00642">
    <property type="entry name" value="zf-CCCH"/>
    <property type="match status" value="1"/>
</dbReference>
<dbReference type="Pfam" id="PF15663">
    <property type="entry name" value="zf-CCCH_3"/>
    <property type="match status" value="1"/>
</dbReference>
<dbReference type="Pfam" id="PF00098">
    <property type="entry name" value="zf-CCHC"/>
    <property type="match status" value="1"/>
</dbReference>
<dbReference type="SMART" id="SM00343">
    <property type="entry name" value="ZnF_C2HC"/>
    <property type="match status" value="1"/>
</dbReference>
<dbReference type="SMART" id="SM00356">
    <property type="entry name" value="ZnF_C3H1"/>
    <property type="match status" value="5"/>
</dbReference>
<dbReference type="SUPFAM" id="SSF90229">
    <property type="entry name" value="CCCH zinc finger"/>
    <property type="match status" value="2"/>
</dbReference>
<dbReference type="SUPFAM" id="SSF57756">
    <property type="entry name" value="Retrovirus zinc finger-like domains"/>
    <property type="match status" value="1"/>
</dbReference>
<dbReference type="PROSITE" id="PS50103">
    <property type="entry name" value="ZF_C3H1"/>
    <property type="match status" value="5"/>
</dbReference>
<dbReference type="PROSITE" id="PS50158">
    <property type="entry name" value="ZF_CCHC"/>
    <property type="match status" value="1"/>
</dbReference>
<accession>Q5FVR7</accession>
<evidence type="ECO:0000250" key="1"/>
<evidence type="ECO:0000250" key="2">
    <source>
        <dbReference type="UniProtKB" id="O95639"/>
    </source>
</evidence>
<evidence type="ECO:0000255" key="3">
    <source>
        <dbReference type="PROSITE-ProRule" id="PRU00047"/>
    </source>
</evidence>
<evidence type="ECO:0000255" key="4">
    <source>
        <dbReference type="PROSITE-ProRule" id="PRU00723"/>
    </source>
</evidence>
<evidence type="ECO:0000305" key="5"/>
<name>CPSF4_RAT</name>
<keyword id="KW-0479">Metal-binding</keyword>
<keyword id="KW-0507">mRNA processing</keyword>
<keyword id="KW-0539">Nucleus</keyword>
<keyword id="KW-0597">Phosphoprotein</keyword>
<keyword id="KW-1185">Reference proteome</keyword>
<keyword id="KW-0677">Repeat</keyword>
<keyword id="KW-0694">RNA-binding</keyword>
<keyword id="KW-0862">Zinc</keyword>
<keyword id="KW-0863">Zinc-finger</keyword>